<comment type="function">
    <text evidence="1">GTPase that plays an essential role in the late steps of ribosome biogenesis.</text>
</comment>
<comment type="subunit">
    <text evidence="1">Associates with the 50S ribosomal subunit.</text>
</comment>
<comment type="similarity">
    <text evidence="1">Belongs to the TRAFAC class TrmE-Era-EngA-EngB-Septin-like GTPase superfamily. EngA (Der) GTPase family.</text>
</comment>
<organism>
    <name type="scientific">Streptococcus agalactiae serotype III (strain NEM316)</name>
    <dbReference type="NCBI Taxonomy" id="211110"/>
    <lineage>
        <taxon>Bacteria</taxon>
        <taxon>Bacillati</taxon>
        <taxon>Bacillota</taxon>
        <taxon>Bacilli</taxon>
        <taxon>Lactobacillales</taxon>
        <taxon>Streptococcaceae</taxon>
        <taxon>Streptococcus</taxon>
    </lineage>
</organism>
<evidence type="ECO:0000255" key="1">
    <source>
        <dbReference type="HAMAP-Rule" id="MF_00195"/>
    </source>
</evidence>
<feature type="chain" id="PRO_0000179050" description="GTPase Der">
    <location>
        <begin position="1"/>
        <end position="436"/>
    </location>
</feature>
<feature type="domain" description="EngA-type G 1">
    <location>
        <begin position="4"/>
        <end position="167"/>
    </location>
</feature>
<feature type="domain" description="EngA-type G 2">
    <location>
        <begin position="175"/>
        <end position="351"/>
    </location>
</feature>
<feature type="domain" description="KH-like" evidence="1">
    <location>
        <begin position="352"/>
        <end position="436"/>
    </location>
</feature>
<feature type="binding site" evidence="1">
    <location>
        <begin position="10"/>
        <end position="17"/>
    </location>
    <ligand>
        <name>GTP</name>
        <dbReference type="ChEBI" id="CHEBI:37565"/>
        <label>1</label>
    </ligand>
</feature>
<feature type="binding site" evidence="1">
    <location>
        <begin position="57"/>
        <end position="61"/>
    </location>
    <ligand>
        <name>GTP</name>
        <dbReference type="ChEBI" id="CHEBI:37565"/>
        <label>1</label>
    </ligand>
</feature>
<feature type="binding site" evidence="1">
    <location>
        <begin position="119"/>
        <end position="122"/>
    </location>
    <ligand>
        <name>GTP</name>
        <dbReference type="ChEBI" id="CHEBI:37565"/>
        <label>1</label>
    </ligand>
</feature>
<feature type="binding site" evidence="1">
    <location>
        <begin position="181"/>
        <end position="188"/>
    </location>
    <ligand>
        <name>GTP</name>
        <dbReference type="ChEBI" id="CHEBI:37565"/>
        <label>2</label>
    </ligand>
</feature>
<feature type="binding site" evidence="1">
    <location>
        <begin position="229"/>
        <end position="233"/>
    </location>
    <ligand>
        <name>GTP</name>
        <dbReference type="ChEBI" id="CHEBI:37565"/>
        <label>2</label>
    </ligand>
</feature>
<feature type="binding site" evidence="1">
    <location>
        <begin position="294"/>
        <end position="297"/>
    </location>
    <ligand>
        <name>GTP</name>
        <dbReference type="ChEBI" id="CHEBI:37565"/>
        <label>2</label>
    </ligand>
</feature>
<name>DER_STRA3</name>
<proteinExistence type="inferred from homology"/>
<dbReference type="EMBL" id="AL766852">
    <property type="protein sequence ID" value="CAD47326.1"/>
    <property type="molecule type" value="Genomic_DNA"/>
</dbReference>
<dbReference type="RefSeq" id="WP_000244013.1">
    <property type="nucleotide sequence ID" value="NC_004368.1"/>
</dbReference>
<dbReference type="SMR" id="Q8E3T9"/>
<dbReference type="KEGG" id="san:gbs1667"/>
<dbReference type="eggNOG" id="COG1160">
    <property type="taxonomic scope" value="Bacteria"/>
</dbReference>
<dbReference type="HOGENOM" id="CLU_016077_6_2_9"/>
<dbReference type="Proteomes" id="UP000000823">
    <property type="component" value="Chromosome"/>
</dbReference>
<dbReference type="GO" id="GO:0005525">
    <property type="term" value="F:GTP binding"/>
    <property type="evidence" value="ECO:0007669"/>
    <property type="project" value="UniProtKB-UniRule"/>
</dbReference>
<dbReference type="GO" id="GO:0043022">
    <property type="term" value="F:ribosome binding"/>
    <property type="evidence" value="ECO:0007669"/>
    <property type="project" value="TreeGrafter"/>
</dbReference>
<dbReference type="GO" id="GO:0042254">
    <property type="term" value="P:ribosome biogenesis"/>
    <property type="evidence" value="ECO:0007669"/>
    <property type="project" value="UniProtKB-KW"/>
</dbReference>
<dbReference type="CDD" id="cd01894">
    <property type="entry name" value="EngA1"/>
    <property type="match status" value="1"/>
</dbReference>
<dbReference type="CDD" id="cd01895">
    <property type="entry name" value="EngA2"/>
    <property type="match status" value="1"/>
</dbReference>
<dbReference type="FunFam" id="3.30.300.20:FF:000004">
    <property type="entry name" value="GTPase Der"/>
    <property type="match status" value="1"/>
</dbReference>
<dbReference type="FunFam" id="3.40.50.300:FF:000040">
    <property type="entry name" value="GTPase Der"/>
    <property type="match status" value="1"/>
</dbReference>
<dbReference type="FunFam" id="3.40.50.300:FF:000057">
    <property type="entry name" value="GTPase Der"/>
    <property type="match status" value="1"/>
</dbReference>
<dbReference type="Gene3D" id="3.30.300.20">
    <property type="match status" value="1"/>
</dbReference>
<dbReference type="Gene3D" id="3.40.50.300">
    <property type="entry name" value="P-loop containing nucleotide triphosphate hydrolases"/>
    <property type="match status" value="2"/>
</dbReference>
<dbReference type="HAMAP" id="MF_00195">
    <property type="entry name" value="GTPase_Der"/>
    <property type="match status" value="1"/>
</dbReference>
<dbReference type="InterPro" id="IPR031166">
    <property type="entry name" value="G_ENGA"/>
</dbReference>
<dbReference type="InterPro" id="IPR006073">
    <property type="entry name" value="GTP-bd"/>
</dbReference>
<dbReference type="InterPro" id="IPR016484">
    <property type="entry name" value="GTPase_Der"/>
</dbReference>
<dbReference type="InterPro" id="IPR032859">
    <property type="entry name" value="KH_dom-like"/>
</dbReference>
<dbReference type="InterPro" id="IPR015946">
    <property type="entry name" value="KH_dom-like_a/b"/>
</dbReference>
<dbReference type="InterPro" id="IPR027417">
    <property type="entry name" value="P-loop_NTPase"/>
</dbReference>
<dbReference type="InterPro" id="IPR005225">
    <property type="entry name" value="Small_GTP-bd"/>
</dbReference>
<dbReference type="NCBIfam" id="TIGR03594">
    <property type="entry name" value="GTPase_EngA"/>
    <property type="match status" value="1"/>
</dbReference>
<dbReference type="NCBIfam" id="TIGR00231">
    <property type="entry name" value="small_GTP"/>
    <property type="match status" value="2"/>
</dbReference>
<dbReference type="PANTHER" id="PTHR43834">
    <property type="entry name" value="GTPASE DER"/>
    <property type="match status" value="1"/>
</dbReference>
<dbReference type="PANTHER" id="PTHR43834:SF6">
    <property type="entry name" value="GTPASE DER"/>
    <property type="match status" value="1"/>
</dbReference>
<dbReference type="Pfam" id="PF14714">
    <property type="entry name" value="KH_dom-like"/>
    <property type="match status" value="1"/>
</dbReference>
<dbReference type="Pfam" id="PF01926">
    <property type="entry name" value="MMR_HSR1"/>
    <property type="match status" value="2"/>
</dbReference>
<dbReference type="PIRSF" id="PIRSF006485">
    <property type="entry name" value="GTP-binding_EngA"/>
    <property type="match status" value="1"/>
</dbReference>
<dbReference type="PRINTS" id="PR00326">
    <property type="entry name" value="GTP1OBG"/>
</dbReference>
<dbReference type="SUPFAM" id="SSF52540">
    <property type="entry name" value="P-loop containing nucleoside triphosphate hydrolases"/>
    <property type="match status" value="2"/>
</dbReference>
<dbReference type="PROSITE" id="PS51712">
    <property type="entry name" value="G_ENGA"/>
    <property type="match status" value="2"/>
</dbReference>
<sequence>MVLPTVAIVGRPNVGKSTLFNRIAGERISIVEDVEGVTRDRIYTTGEWLNRKFSLIDTGGIDDVDAPFMEQIKHQADIAMTEADVIVFVVSGKEGVTDADEYVSLILYKTNKPVILAVNKVDNPEMRNDIYDFYSLGLGDPYPLSSVHGIGTGDILDAIVENLPVEEENENPDIIRFSLIGRPNVGKSSLINAILGEDRVIASPVAGTTRDAIDTNFVDSQGQEYTMIDTAGMRKSGKVYENTEKYSVMRSMRAIDRSDVVLMVINAEEGIREYDKRIAGFAHEAGKGIIIVVNKWDTIEKDSHTVSQWEADIRDNFQFLSYAPIIFVSAETKQRLHKLPDMIKRISESQNKRIPSAVLNDVIMDAIAINPTPTDKGKRLKIFYATQVAVKPPTFVVFVNEEELMHFSYLRFLENQIREAFVFEGTPINLIARKRK</sequence>
<protein>
    <recommendedName>
        <fullName evidence="1">GTPase Der</fullName>
    </recommendedName>
    <alternativeName>
        <fullName evidence="1">GTP-binding protein EngA</fullName>
    </alternativeName>
</protein>
<accession>Q8E3T9</accession>
<keyword id="KW-0342">GTP-binding</keyword>
<keyword id="KW-0547">Nucleotide-binding</keyword>
<keyword id="KW-0677">Repeat</keyword>
<keyword id="KW-0690">Ribosome biogenesis</keyword>
<reference key="1">
    <citation type="journal article" date="2002" name="Mol. Microbiol.">
        <title>Genome sequence of Streptococcus agalactiae, a pathogen causing invasive neonatal disease.</title>
        <authorList>
            <person name="Glaser P."/>
            <person name="Rusniok C."/>
            <person name="Buchrieser C."/>
            <person name="Chevalier F."/>
            <person name="Frangeul L."/>
            <person name="Msadek T."/>
            <person name="Zouine M."/>
            <person name="Couve E."/>
            <person name="Lalioui L."/>
            <person name="Poyart C."/>
            <person name="Trieu-Cuot P."/>
            <person name="Kunst F."/>
        </authorList>
    </citation>
    <scope>NUCLEOTIDE SEQUENCE [LARGE SCALE GENOMIC DNA]</scope>
    <source>
        <strain>NEM316</strain>
    </source>
</reference>
<gene>
    <name evidence="1" type="primary">der</name>
    <name type="synonym">engA</name>
    <name type="ordered locus">gbs1667</name>
</gene>